<evidence type="ECO:0000269" key="1">
    <source>
    </source>
</evidence>
<evidence type="ECO:0000269" key="2">
    <source>
    </source>
</evidence>
<evidence type="ECO:0000269" key="3">
    <source>
    </source>
</evidence>
<evidence type="ECO:0000269" key="4">
    <source>
    </source>
</evidence>
<evidence type="ECO:0000269" key="5">
    <source>
    </source>
</evidence>
<evidence type="ECO:0000269" key="6">
    <source>
    </source>
</evidence>
<evidence type="ECO:0000269" key="7">
    <source>
    </source>
</evidence>
<evidence type="ECO:0000303" key="8">
    <source>
    </source>
</evidence>
<evidence type="ECO:0000303" key="9">
    <source>
    </source>
</evidence>
<evidence type="ECO:0000303" key="10">
    <source>
    </source>
</evidence>
<evidence type="ECO:0000305" key="11"/>
<evidence type="ECO:0000305" key="12">
    <source>
    </source>
</evidence>
<evidence type="ECO:0000305" key="13">
    <source>
    </source>
</evidence>
<evidence type="ECO:0000312" key="14">
    <source>
        <dbReference type="PDB" id="1CNN"/>
    </source>
</evidence>
<evidence type="ECO:0000312" key="15">
    <source>
        <dbReference type="PDB" id="1OMN"/>
    </source>
</evidence>
<evidence type="ECO:0000312" key="16">
    <source>
        <dbReference type="PDB" id="1V4Q"/>
    </source>
</evidence>
<evidence type="ECO:0007829" key="17">
    <source>
        <dbReference type="PDB" id="8X91"/>
    </source>
</evidence>
<dbReference type="EMBL" id="S40826">
    <property type="protein sequence ID" value="AAB22674.1"/>
    <property type="molecule type" value="mRNA"/>
</dbReference>
<dbReference type="PIR" id="JH0699">
    <property type="entry name" value="JH0699"/>
</dbReference>
<dbReference type="PDB" id="1CNN">
    <property type="method" value="NMR"/>
    <property type="chains" value="A=3-28"/>
</dbReference>
<dbReference type="PDB" id="1OMN">
    <property type="method" value="NMR"/>
    <property type="chains" value="A=3-28"/>
</dbReference>
<dbReference type="PDB" id="1V4Q">
    <property type="method" value="NMR"/>
    <property type="chains" value="A=3-26"/>
</dbReference>
<dbReference type="PDB" id="8X91">
    <property type="method" value="EM"/>
    <property type="resolution" value="3.11 A"/>
    <property type="chains" value="X=3-28"/>
</dbReference>
<dbReference type="PDBsum" id="1CNN"/>
<dbReference type="PDBsum" id="1OMN"/>
<dbReference type="PDBsum" id="1V4Q"/>
<dbReference type="PDBsum" id="8X91"/>
<dbReference type="BMRB" id="P37300"/>
<dbReference type="EMDB" id="EMD-38159"/>
<dbReference type="SMR" id="P37300"/>
<dbReference type="ConoServer" id="822">
    <property type="toxin name" value="MVIIC precursor"/>
</dbReference>
<dbReference type="EvolutionaryTrace" id="P37300"/>
<dbReference type="GO" id="GO:0005576">
    <property type="term" value="C:extracellular region"/>
    <property type="evidence" value="ECO:0007669"/>
    <property type="project" value="UniProtKB-SubCell"/>
</dbReference>
<dbReference type="GO" id="GO:0044231">
    <property type="term" value="C:host cell presynaptic membrane"/>
    <property type="evidence" value="ECO:0007669"/>
    <property type="project" value="UniProtKB-KW"/>
</dbReference>
<dbReference type="GO" id="GO:0005246">
    <property type="term" value="F:calcium channel regulator activity"/>
    <property type="evidence" value="ECO:0007669"/>
    <property type="project" value="UniProtKB-KW"/>
</dbReference>
<dbReference type="GO" id="GO:0008200">
    <property type="term" value="F:ion channel inhibitor activity"/>
    <property type="evidence" value="ECO:0007669"/>
    <property type="project" value="InterPro"/>
</dbReference>
<dbReference type="GO" id="GO:0090729">
    <property type="term" value="F:toxin activity"/>
    <property type="evidence" value="ECO:0007669"/>
    <property type="project" value="UniProtKB-KW"/>
</dbReference>
<dbReference type="InterPro" id="IPR012321">
    <property type="entry name" value="Conotoxin_omega-typ_CS"/>
</dbReference>
<dbReference type="SUPFAM" id="SSF57059">
    <property type="entry name" value="omega toxin-like"/>
    <property type="match status" value="1"/>
</dbReference>
<dbReference type="PROSITE" id="PS60004">
    <property type="entry name" value="OMEGA_CONOTOXIN"/>
    <property type="match status" value="1"/>
</dbReference>
<reference key="1">
    <citation type="journal article" date="1992" name="Neuron">
        <title>A new Conus peptide ligand for mammalian presynaptic Ca2+ channels.</title>
        <authorList>
            <person name="Hillyard D.R."/>
            <person name="Monje V.D."/>
            <person name="Mintz I.M."/>
            <person name="Bean B.P."/>
            <person name="Nadasdi L."/>
            <person name="Ramachandran J."/>
            <person name="Miljanich G.P."/>
            <person name="Azimi-Zoonooz A."/>
            <person name="McIntosh J.M."/>
            <person name="Cruz L.J."/>
            <person name="Imperial J.S."/>
            <person name="Olivera B.M."/>
        </authorList>
    </citation>
    <scope>NUCLEOTIDE SEQUENCE [MRNA]</scope>
    <scope>AMIDATION AT CYS-28</scope>
    <scope>SYNTHESIS OF 3-28</scope>
    <scope>FUNCTION</scope>
</reference>
<reference key="2">
    <citation type="journal article" date="1995" name="Biochem. Biophys. Res. Commun.">
        <title>Tyr13 is essential for the binding of omega-conotoxin MVIIC to the P/Q-type calcium channel.</title>
        <authorList>
            <person name="Kim J.-I."/>
            <person name="Takahashi M."/>
            <person name="Martin-Moutot N."/>
            <person name="Seagar M.J."/>
            <person name="Ohtake A."/>
            <person name="Sato K."/>
        </authorList>
    </citation>
    <scope>MUTAGENESIS OF TYR-15</scope>
</reference>
<reference key="3">
    <citation type="journal article" date="2000" name="J. Biol. Chem.">
        <title>Novel omega-conotoxins from Conus catus discriminate among neuronal calcium channel subtypes.</title>
        <authorList>
            <person name="Lewis R.J."/>
            <person name="Nielsen K.J."/>
            <person name="Craik D.J."/>
            <person name="Loughnan M.L."/>
            <person name="Adams D.A."/>
            <person name="Sharpe I.A."/>
            <person name="Luchian T."/>
            <person name="Adams D.J."/>
            <person name="Bond T."/>
            <person name="Thomas L."/>
            <person name="Jones A."/>
            <person name="Matheson J.-L."/>
            <person name="Drinkwater R."/>
            <person name="Andrews P.R."/>
            <person name="Alewood P.F."/>
        </authorList>
    </citation>
    <scope>FUNCTION</scope>
</reference>
<reference key="4">
    <citation type="journal article" date="2008" name="Biochemistry">
        <title>Role of hydroxyprolines in the in vitro oxidative folding and biological activity of conotoxins.</title>
        <authorList>
            <person name="Lopez-Vera E."/>
            <person name="Walewska A."/>
            <person name="Skalicky J.J."/>
            <person name="Olivera B.M."/>
            <person name="Bulaj G."/>
        </authorList>
    </citation>
    <scope>SYNTHESIS OF 3-28</scope>
    <scope>ROLE OF HYDROXYLATION</scope>
</reference>
<reference key="5">
    <citation type="journal article" date="1995" name="J. Neurol. Neurosurg. Psych.">
        <title>An improved diagnostic assay for Lambert-Eaton myasthenic syndrome.</title>
        <authorList>
            <person name="Motomura M."/>
            <person name="Johnston I."/>
            <person name="Lang B."/>
            <person name="Vincent A."/>
            <person name="Newsom-Davis J."/>
        </authorList>
    </citation>
    <scope>BIOTECHNOLOGY</scope>
</reference>
<reference key="6">
    <citation type="journal article" date="1995" name="J. Mol. Biol.">
        <title>Solution structure of omega-conotoxin MVIIC, a high affinity ligand of P-type calcium channels, using 1H NMR spectroscopy and complete relaxation matrix analysis.</title>
        <authorList>
            <person name="Farr-Jones S."/>
            <person name="Miljanich G.P."/>
            <person name="Nadasdi L."/>
            <person name="Ramachandran J."/>
            <person name="Basus V.J."/>
        </authorList>
    </citation>
    <scope>STRUCTURE BY NMR OF 3-28</scope>
    <scope>DISULFIDE BONDS</scope>
</reference>
<reference key="7">
    <citation type="journal article" date="1999" name="J. Mol. Biol.">
        <title>Structure-activity relationships of omega-conotoxins MVIIA, MVIIC and 14 loop splice hybrids at N and P/Q-type calcium channels.</title>
        <authorList>
            <person name="Nielsen K.J."/>
            <person name="Adams D."/>
            <person name="Thomas L."/>
            <person name="Bond T."/>
            <person name="Alewood P.F."/>
            <person name="Craik D.J."/>
            <person name="Lewis R.J."/>
        </authorList>
    </citation>
    <scope>STRUCTURE BY NMR OF 3-28</scope>
    <scope>DISULFIDE BONDS</scope>
</reference>
<feature type="propeptide" id="PRO_0000034916">
    <location>
        <begin position="1" status="less than"/>
        <end position="2"/>
    </location>
</feature>
<feature type="peptide" id="PRO_0000034917" description="Omega-conotoxin MVIIC" evidence="12">
    <location>
        <begin position="3"/>
        <end position="28"/>
    </location>
</feature>
<feature type="site" description="Important for Cav2.1/CACNA1A calcium channel binding" evidence="13">
    <location>
        <position position="15"/>
    </location>
</feature>
<feature type="modified residue" description="Cysteine amide" evidence="3">
    <location>
        <position position="28"/>
    </location>
</feature>
<feature type="disulfide bond" evidence="1 6 14 15 16">
    <location>
        <begin position="3"/>
        <end position="18"/>
    </location>
</feature>
<feature type="disulfide bond" evidence="1 6 14 15 16">
    <location>
        <begin position="10"/>
        <end position="22"/>
    </location>
</feature>
<feature type="disulfide bond" evidence="1 6 14 15 16">
    <location>
        <begin position="17"/>
        <end position="28"/>
    </location>
</feature>
<feature type="mutagenesis site" description="High decrease in activity on Cav2.1/CACNA1A." evidence="5">
    <original>Y</original>
    <variation>A</variation>
    <location>
        <position position="15"/>
    </location>
</feature>
<feature type="non-terminal residue" evidence="12">
    <location>
        <position position="1"/>
    </location>
</feature>
<feature type="helix" evidence="17">
    <location>
        <begin position="12"/>
        <end position="14"/>
    </location>
</feature>
<feature type="strand" evidence="17">
    <location>
        <begin position="18"/>
        <end position="20"/>
    </location>
</feature>
<keyword id="KW-0002">3D-structure</keyword>
<keyword id="KW-0027">Amidation</keyword>
<keyword id="KW-0108">Calcium channel impairing toxin</keyword>
<keyword id="KW-1015">Disulfide bond</keyword>
<keyword id="KW-0872">Ion channel impairing toxin</keyword>
<keyword id="KW-0960">Knottin</keyword>
<keyword id="KW-0528">Neurotoxin</keyword>
<keyword id="KW-0638">Presynaptic neurotoxin</keyword>
<keyword id="KW-0964">Secreted</keyword>
<keyword id="KW-0800">Toxin</keyword>
<keyword id="KW-1218">Voltage-gated calcium channel impairing toxin</keyword>
<comment type="function">
    <text evidence="2 3">Omega-conotoxins act at presynaptic membranes, they bind and block voltage-gated calcium channels (Cav). This toxin preferentially blocks P/Q-type calcium channels (Cav2.1/CACNA1A) (IC(50)=0.60 nM) (PubMed:10938268, PubMed:1352986). Also shows an inhibition on Cav2.2/CACNA1A channels (IC(50)=7.0 nM) (PubMed:10938268).</text>
</comment>
<comment type="subcellular location">
    <subcellularLocation>
        <location evidence="12">Secreted</location>
    </subcellularLocation>
</comment>
<comment type="tissue specificity">
    <text evidence="12">Expressed by the venom duct.</text>
</comment>
<comment type="domain">
    <text evidence="1 6">The presence of a 'disulfide through disulfide knot' structurally defines this protein as a knottin.</text>
</comment>
<comment type="domain">
    <text evidence="11">The cysteine framework is VI/VII (C-C-CC-C-C).</text>
</comment>
<comment type="PTM">
    <text evidence="4">Not hydroxylated; hydroxylation, on a synthetic hydroxylated MVIIC, has a significant impact on the oxidative folding but not on the biological activity.</text>
</comment>
<comment type="biotechnology">
    <text evidence="7">Could be used as a diagnostic tool for the autoimmune disease Lambert-Eaton myasthenic syndrome.</text>
</comment>
<comment type="similarity">
    <text evidence="11">Belongs to the conotoxin O1 superfamily.</text>
</comment>
<protein>
    <recommendedName>
        <fullName evidence="9 10">Omega-conotoxin MVIIC</fullName>
        <shortName evidence="8">Omega-CgTxMVIIC</shortName>
    </recommendedName>
    <alternativeName>
        <fullName>SNX-230</fullName>
    </alternativeName>
</protein>
<organism>
    <name type="scientific">Conus magus</name>
    <name type="common">Magical cone</name>
    <dbReference type="NCBI Taxonomy" id="6492"/>
    <lineage>
        <taxon>Eukaryota</taxon>
        <taxon>Metazoa</taxon>
        <taxon>Spiralia</taxon>
        <taxon>Lophotrochozoa</taxon>
        <taxon>Mollusca</taxon>
        <taxon>Gastropoda</taxon>
        <taxon>Caenogastropoda</taxon>
        <taxon>Neogastropoda</taxon>
        <taxon>Conoidea</taxon>
        <taxon>Conidae</taxon>
        <taxon>Conus</taxon>
        <taxon>Pionoconus</taxon>
    </lineage>
</organism>
<sequence>TRCKGKGAPCRKTMYDCCSGSCGRRGKCG</sequence>
<proteinExistence type="evidence at protein level"/>
<name>O17C_CONMA</name>
<accession>P37300</accession>